<gene>
    <name type="primary">folB</name>
    <name type="ordered locus">SAV0515</name>
</gene>
<protein>
    <recommendedName>
        <fullName>Dihydroneopterin aldolase</fullName>
        <shortName>DHNA</shortName>
        <ecNumber evidence="2">4.1.2.25</ecNumber>
    </recommendedName>
    <alternativeName>
        <fullName>7,8-dihydroneopterin 2'-epimerase</fullName>
    </alternativeName>
    <alternativeName>
        <fullName>7,8-dihydroneopterin aldolase</fullName>
    </alternativeName>
    <alternativeName>
        <fullName>7,8-dihydroneopterin epimerase</fullName>
        <ecNumber evidence="2">5.1.99.8</ecNumber>
    </alternativeName>
    <alternativeName>
        <fullName>Dihydroneopterin epimerase</fullName>
    </alternativeName>
</protein>
<evidence type="ECO:0000250" key="1"/>
<evidence type="ECO:0000250" key="2">
    <source>
        <dbReference type="UniProtKB" id="P0AC16"/>
    </source>
</evidence>
<evidence type="ECO:0000250" key="3">
    <source>
        <dbReference type="UniProtKB" id="P56740"/>
    </source>
</evidence>
<evidence type="ECO:0000305" key="4"/>
<comment type="function">
    <text evidence="3">Catalyzes the conversion of 7,8-dihydroneopterin to 6-hydroxymethyl-7,8-dihydropterin. Can also catalyze the epimerization of carbon 2' of dihydroneopterin to dihydromonapterin.</text>
</comment>
<comment type="catalytic activity">
    <reaction evidence="3">
        <text>7,8-dihydroneopterin = 6-hydroxymethyl-7,8-dihydropterin + glycolaldehyde</text>
        <dbReference type="Rhea" id="RHEA:10540"/>
        <dbReference type="ChEBI" id="CHEBI:17001"/>
        <dbReference type="ChEBI" id="CHEBI:17071"/>
        <dbReference type="ChEBI" id="CHEBI:44841"/>
        <dbReference type="EC" id="4.1.2.25"/>
    </reaction>
</comment>
<comment type="catalytic activity">
    <reaction evidence="2">
        <text>7,8-dihydroneopterin = 7,8-dihydromonapterin</text>
        <dbReference type="Rhea" id="RHEA:45328"/>
        <dbReference type="ChEBI" id="CHEBI:17001"/>
        <dbReference type="ChEBI" id="CHEBI:71175"/>
        <dbReference type="EC" id="5.1.99.8"/>
    </reaction>
</comment>
<comment type="pathway">
    <text>Cofactor biosynthesis; tetrahydrofolate biosynthesis; 2-amino-4-hydroxy-6-hydroxymethyl-7,8-dihydropteridine diphosphate from 7,8-dihydroneopterin triphosphate: step 3/4.</text>
</comment>
<comment type="subunit">
    <text evidence="1">Homooctamer. Four molecules assemble into a ring, and two rings come together to give a cylinder with a hole of at least 13 a diameter (By similarity).</text>
</comment>
<comment type="similarity">
    <text evidence="4">Belongs to the DHNA family.</text>
</comment>
<reference key="1">
    <citation type="journal article" date="2001" name="Lancet">
        <title>Whole genome sequencing of meticillin-resistant Staphylococcus aureus.</title>
        <authorList>
            <person name="Kuroda M."/>
            <person name="Ohta T."/>
            <person name="Uchiyama I."/>
            <person name="Baba T."/>
            <person name="Yuzawa H."/>
            <person name="Kobayashi I."/>
            <person name="Cui L."/>
            <person name="Oguchi A."/>
            <person name="Aoki K."/>
            <person name="Nagai Y."/>
            <person name="Lian J.-Q."/>
            <person name="Ito T."/>
            <person name="Kanamori M."/>
            <person name="Matsumaru H."/>
            <person name="Maruyama A."/>
            <person name="Murakami H."/>
            <person name="Hosoyama A."/>
            <person name="Mizutani-Ui Y."/>
            <person name="Takahashi N.K."/>
            <person name="Sawano T."/>
            <person name="Inoue R."/>
            <person name="Kaito C."/>
            <person name="Sekimizu K."/>
            <person name="Hirakawa H."/>
            <person name="Kuhara S."/>
            <person name="Goto S."/>
            <person name="Yabuzaki J."/>
            <person name="Kanehisa M."/>
            <person name="Yamashita A."/>
            <person name="Oshima K."/>
            <person name="Furuya K."/>
            <person name="Yoshino C."/>
            <person name="Shiba T."/>
            <person name="Hattori M."/>
            <person name="Ogasawara N."/>
            <person name="Hayashi H."/>
            <person name="Hiramatsu K."/>
        </authorList>
    </citation>
    <scope>NUCLEOTIDE SEQUENCE [LARGE SCALE GENOMIC DNA]</scope>
    <source>
        <strain>Mu50 / ATCC 700699</strain>
    </source>
</reference>
<accession>P64145</accession>
<accession>Q99W88</accession>
<proteinExistence type="inferred from homology"/>
<dbReference type="EC" id="4.1.2.25" evidence="2"/>
<dbReference type="EC" id="5.1.99.8" evidence="2"/>
<dbReference type="EMBL" id="BA000017">
    <property type="protein sequence ID" value="BAB56677.1"/>
    <property type="molecule type" value="Genomic_DNA"/>
</dbReference>
<dbReference type="RefSeq" id="WP_001154302.1">
    <property type="nucleotide sequence ID" value="NC_002758.2"/>
</dbReference>
<dbReference type="BMRB" id="P64145"/>
<dbReference type="SMR" id="P64145"/>
<dbReference type="KEGG" id="sav:SAV0515"/>
<dbReference type="HOGENOM" id="CLU_112632_1_3_9"/>
<dbReference type="PhylomeDB" id="P64145"/>
<dbReference type="UniPathway" id="UPA00077">
    <property type="reaction ID" value="UER00154"/>
</dbReference>
<dbReference type="Proteomes" id="UP000002481">
    <property type="component" value="Chromosome"/>
</dbReference>
<dbReference type="GO" id="GO:0005737">
    <property type="term" value="C:cytoplasm"/>
    <property type="evidence" value="ECO:0007669"/>
    <property type="project" value="TreeGrafter"/>
</dbReference>
<dbReference type="GO" id="GO:0004150">
    <property type="term" value="F:dihydroneopterin aldolase activity"/>
    <property type="evidence" value="ECO:0007669"/>
    <property type="project" value="UniProtKB-EC"/>
</dbReference>
<dbReference type="GO" id="GO:0016853">
    <property type="term" value="F:isomerase activity"/>
    <property type="evidence" value="ECO:0007669"/>
    <property type="project" value="UniProtKB-KW"/>
</dbReference>
<dbReference type="GO" id="GO:0046656">
    <property type="term" value="P:folic acid biosynthetic process"/>
    <property type="evidence" value="ECO:0007669"/>
    <property type="project" value="UniProtKB-KW"/>
</dbReference>
<dbReference type="GO" id="GO:0046654">
    <property type="term" value="P:tetrahydrofolate biosynthetic process"/>
    <property type="evidence" value="ECO:0007669"/>
    <property type="project" value="UniProtKB-UniPathway"/>
</dbReference>
<dbReference type="CDD" id="cd00534">
    <property type="entry name" value="DHNA_DHNTPE"/>
    <property type="match status" value="1"/>
</dbReference>
<dbReference type="FunFam" id="3.30.1130.10:FF:000003">
    <property type="entry name" value="7,8-dihydroneopterin aldolase"/>
    <property type="match status" value="1"/>
</dbReference>
<dbReference type="Gene3D" id="3.30.1130.10">
    <property type="match status" value="1"/>
</dbReference>
<dbReference type="InterPro" id="IPR006156">
    <property type="entry name" value="Dihydroneopterin_aldolase"/>
</dbReference>
<dbReference type="InterPro" id="IPR006157">
    <property type="entry name" value="FolB_dom"/>
</dbReference>
<dbReference type="InterPro" id="IPR043133">
    <property type="entry name" value="GTP-CH-I_C/QueF"/>
</dbReference>
<dbReference type="NCBIfam" id="TIGR00525">
    <property type="entry name" value="folB"/>
    <property type="match status" value="1"/>
</dbReference>
<dbReference type="NCBIfam" id="TIGR00526">
    <property type="entry name" value="folB_dom"/>
    <property type="match status" value="1"/>
</dbReference>
<dbReference type="PANTHER" id="PTHR42844">
    <property type="entry name" value="DIHYDRONEOPTERIN ALDOLASE 1-RELATED"/>
    <property type="match status" value="1"/>
</dbReference>
<dbReference type="PANTHER" id="PTHR42844:SF1">
    <property type="entry name" value="DIHYDRONEOPTERIN ALDOLASE 1-RELATED"/>
    <property type="match status" value="1"/>
</dbReference>
<dbReference type="Pfam" id="PF02152">
    <property type="entry name" value="FolB"/>
    <property type="match status" value="1"/>
</dbReference>
<dbReference type="SMART" id="SM00905">
    <property type="entry name" value="FolB"/>
    <property type="match status" value="1"/>
</dbReference>
<dbReference type="SUPFAM" id="SSF55620">
    <property type="entry name" value="Tetrahydrobiopterin biosynthesis enzymes-like"/>
    <property type="match status" value="1"/>
</dbReference>
<feature type="chain" id="PRO_0000168278" description="Dihydroneopterin aldolase">
    <location>
        <begin position="1"/>
        <end position="121"/>
    </location>
</feature>
<feature type="active site" description="Proton donor/acceptor" evidence="3">
    <location>
        <position position="100"/>
    </location>
</feature>
<feature type="binding site" evidence="3">
    <location>
        <position position="22"/>
    </location>
    <ligand>
        <name>substrate</name>
    </ligand>
</feature>
<feature type="binding site" evidence="3">
    <location>
        <position position="54"/>
    </location>
    <ligand>
        <name>substrate</name>
    </ligand>
</feature>
<feature type="binding site" evidence="3">
    <location>
        <begin position="73"/>
        <end position="74"/>
    </location>
    <ligand>
        <name>substrate</name>
    </ligand>
</feature>
<name>FOLB_STAAM</name>
<sequence length="121" mass="13735">MQDTIFLKGMRFYGYHGALSAENEIGQIFKVDVTLKVDLAEAGRTDNVIDTVHYGEVFEEVKSIMEGKAVNLLEHLAERIANRINSQYNRVMETKVRITKENPPIPGHYDGVGIEIVRENK</sequence>
<organism>
    <name type="scientific">Staphylococcus aureus (strain Mu50 / ATCC 700699)</name>
    <dbReference type="NCBI Taxonomy" id="158878"/>
    <lineage>
        <taxon>Bacteria</taxon>
        <taxon>Bacillati</taxon>
        <taxon>Bacillota</taxon>
        <taxon>Bacilli</taxon>
        <taxon>Bacillales</taxon>
        <taxon>Staphylococcaceae</taxon>
        <taxon>Staphylococcus</taxon>
    </lineage>
</organism>
<keyword id="KW-0289">Folate biosynthesis</keyword>
<keyword id="KW-0413">Isomerase</keyword>
<keyword id="KW-0456">Lyase</keyword>